<proteinExistence type="evidence at transcript level"/>
<evidence type="ECO:0000255" key="1"/>
<evidence type="ECO:0000269" key="2">
    <source>
    </source>
</evidence>
<evidence type="ECO:0000305" key="3"/>
<sequence>MATKSTSKPLLLSFLMMSYLISTFHVITVAEGRTLQFTKMATDHSGAGNLMDCWNAGLELKSCTDEIVKFFLSQTGTSEPPVKGGIDKDCCGAIGLVVKDCWSVMFTSLGLTTMEGNNLREYCEFQAEKSELSPSPAPETLALSPVEITYPGLDY</sequence>
<protein>
    <recommendedName>
        <fullName>Egg cell-secreted protein 1.5</fullName>
    </recommendedName>
</protein>
<comment type="function">
    <text evidence="2">Involved in the regulation of gamete interactions during the double fertilization and to prevent multiple-pollen tube attraction; mediates the redistribution of the gamete fusogen HAP2/GCS1 to the cell surface after secretion upon sperm arrival.</text>
</comment>
<comment type="subcellular location">
    <subcellularLocation>
        <location evidence="2">Cytoplasmic vesicle</location>
    </subcellularLocation>
    <subcellularLocation>
        <location evidence="2">Secreted</location>
    </subcellularLocation>
    <text>Secreted via vesicle exocytose upon sperm arrival, especially in the apical region of the degenerating synergid cell.</text>
</comment>
<comment type="tissue specificity">
    <text evidence="2">Restricted to female reproductive tissues, specifically accumulating in storage vesicles of the unfertilized egg cell.</text>
</comment>
<comment type="developmental stage">
    <text evidence="2">Confined to the egg cell before fertilization, but disappears upon gamete fusion. Also present in zygotes and early embryos.</text>
</comment>
<comment type="similarity">
    <text evidence="3">Belongs to the plant egg cell-secreted peptide family.</text>
</comment>
<keyword id="KW-0968">Cytoplasmic vesicle</keyword>
<keyword id="KW-0278">Fertilization</keyword>
<keyword id="KW-1185">Reference proteome</keyword>
<keyword id="KW-0964">Secreted</keyword>
<keyword id="KW-0732">Signal</keyword>
<gene>
    <name type="primary">EC1.5</name>
    <name type="ordered locus">At5g64720</name>
    <name type="ORF">MVP7.4</name>
</gene>
<dbReference type="EMBL" id="AB025637">
    <property type="protein sequence ID" value="BAB10305.1"/>
    <property type="molecule type" value="Genomic_DNA"/>
</dbReference>
<dbReference type="EMBL" id="CP002688">
    <property type="protein sequence ID" value="AED97943.1"/>
    <property type="molecule type" value="Genomic_DNA"/>
</dbReference>
<dbReference type="EMBL" id="BT029327">
    <property type="protein sequence ID" value="ABK32141.1"/>
    <property type="molecule type" value="mRNA"/>
</dbReference>
<dbReference type="RefSeq" id="NP_201277.3">
    <property type="nucleotide sequence ID" value="NM_125868.4"/>
</dbReference>
<dbReference type="STRING" id="3702.Q9FGG1"/>
<dbReference type="PaxDb" id="3702-AT5G64720.1"/>
<dbReference type="ProteomicsDB" id="222053"/>
<dbReference type="DNASU" id="836593"/>
<dbReference type="EnsemblPlants" id="AT5G64720.1">
    <property type="protein sequence ID" value="AT5G64720.1"/>
    <property type="gene ID" value="AT5G64720"/>
</dbReference>
<dbReference type="GeneID" id="836593"/>
<dbReference type="Gramene" id="AT5G64720.1">
    <property type="protein sequence ID" value="AT5G64720.1"/>
    <property type="gene ID" value="AT5G64720"/>
</dbReference>
<dbReference type="KEGG" id="ath:AT5G64720"/>
<dbReference type="Araport" id="AT5G64720"/>
<dbReference type="TAIR" id="AT5G64720">
    <property type="gene designation" value="EC1.5"/>
</dbReference>
<dbReference type="HOGENOM" id="CLU_128969_2_0_1"/>
<dbReference type="InParanoid" id="Q9FGG1"/>
<dbReference type="OMA" id="LREYCEF"/>
<dbReference type="OrthoDB" id="1089556at2759"/>
<dbReference type="PhylomeDB" id="Q9FGG1"/>
<dbReference type="PRO" id="PR:Q9FGG1"/>
<dbReference type="Proteomes" id="UP000006548">
    <property type="component" value="Chromosome 5"/>
</dbReference>
<dbReference type="ExpressionAtlas" id="Q9FGG1">
    <property type="expression patterns" value="baseline and differential"/>
</dbReference>
<dbReference type="GO" id="GO:0031410">
    <property type="term" value="C:cytoplasmic vesicle"/>
    <property type="evidence" value="ECO:0007669"/>
    <property type="project" value="UniProtKB-KW"/>
</dbReference>
<dbReference type="GO" id="GO:0005576">
    <property type="term" value="C:extracellular region"/>
    <property type="evidence" value="ECO:0000314"/>
    <property type="project" value="UniProtKB"/>
</dbReference>
<dbReference type="GO" id="GO:0031982">
    <property type="term" value="C:vesicle"/>
    <property type="evidence" value="ECO:0000314"/>
    <property type="project" value="UniProtKB"/>
</dbReference>
<dbReference type="GO" id="GO:0009567">
    <property type="term" value="P:double fertilization forming a zygote and endosperm"/>
    <property type="evidence" value="ECO:0000316"/>
    <property type="project" value="TAIR"/>
</dbReference>
<dbReference type="GO" id="GO:0080155">
    <property type="term" value="P:regulation of double fertilization forming a zygote and endosperm"/>
    <property type="evidence" value="ECO:0000315"/>
    <property type="project" value="UniProtKB"/>
</dbReference>
<dbReference type="GO" id="GO:2000008">
    <property type="term" value="P:regulation of protein localization to cell surface"/>
    <property type="evidence" value="ECO:0000315"/>
    <property type="project" value="UniProtKB"/>
</dbReference>
<dbReference type="InterPro" id="IPR044711">
    <property type="entry name" value="EC11-15"/>
</dbReference>
<dbReference type="InterPro" id="IPR008502">
    <property type="entry name" value="Prolamin-like"/>
</dbReference>
<dbReference type="PANTHER" id="PTHR35293">
    <property type="entry name" value="EGG CELL-SECRETED PROTEIN 1.5"/>
    <property type="match status" value="1"/>
</dbReference>
<dbReference type="PANTHER" id="PTHR35293:SF1">
    <property type="entry name" value="EGG CELL-SECRETED PROTEIN 1.5"/>
    <property type="match status" value="1"/>
</dbReference>
<dbReference type="Pfam" id="PF05617">
    <property type="entry name" value="Prolamin_like"/>
    <property type="match status" value="1"/>
</dbReference>
<reference key="1">
    <citation type="submission" date="1999-04" db="EMBL/GenBank/DDBJ databases">
        <title>Structural analysis of Arabidopsis thaliana chromosome 5. XI.</title>
        <authorList>
            <person name="Kaneko T."/>
            <person name="Katoh T."/>
            <person name="Asamizu E."/>
            <person name="Sato S."/>
            <person name="Nakamura Y."/>
            <person name="Kotani H."/>
            <person name="Tabata S."/>
        </authorList>
    </citation>
    <scope>NUCLEOTIDE SEQUENCE [LARGE SCALE GENOMIC DNA]</scope>
    <source>
        <strain>cv. Columbia</strain>
    </source>
</reference>
<reference key="2">
    <citation type="journal article" date="2017" name="Plant J.">
        <title>Araport11: a complete reannotation of the Arabidopsis thaliana reference genome.</title>
        <authorList>
            <person name="Cheng C.Y."/>
            <person name="Krishnakumar V."/>
            <person name="Chan A.P."/>
            <person name="Thibaud-Nissen F."/>
            <person name="Schobel S."/>
            <person name="Town C.D."/>
        </authorList>
    </citation>
    <scope>GENOME REANNOTATION</scope>
    <source>
        <strain>cv. Columbia</strain>
    </source>
</reference>
<reference key="3">
    <citation type="submission" date="2006-11" db="EMBL/GenBank/DDBJ databases">
        <title>Arabidopsis ORF Clones.</title>
        <authorList>
            <person name="Bautista V.R."/>
            <person name="Kim C.J."/>
            <person name="Chen H."/>
            <person name="Quinitio C."/>
            <person name="Ecker J.R."/>
        </authorList>
    </citation>
    <scope>NUCLEOTIDE SEQUENCE [LARGE SCALE MRNA]</scope>
    <source>
        <strain>cv. Columbia</strain>
    </source>
</reference>
<reference key="4">
    <citation type="journal article" date="2012" name="Science">
        <title>Egg cell-secreted EC1 triggers sperm cell activation during double fertilization.</title>
        <authorList>
            <person name="Sprunck S."/>
            <person name="Rademacher S."/>
            <person name="Vogler F."/>
            <person name="Gheyselinck J."/>
            <person name="Grossniklaus U."/>
            <person name="Dresselhaus T."/>
        </authorList>
    </citation>
    <scope>FUNCTION</scope>
    <scope>TISSUE SPECIFICITY</scope>
    <scope>DEVELOPMENTAL STAGE</scope>
    <scope>SUBCELLULAR LOCATION</scope>
</reference>
<name>EC15_ARATH</name>
<accession>Q9FGG1</accession>
<feature type="signal peptide" evidence="1">
    <location>
        <begin position="1"/>
        <end position="32"/>
    </location>
</feature>
<feature type="chain" id="PRO_0000421245" description="Egg cell-secreted protein 1.5">
    <location>
        <begin position="33"/>
        <end position="155"/>
    </location>
</feature>
<organism>
    <name type="scientific">Arabidopsis thaliana</name>
    <name type="common">Mouse-ear cress</name>
    <dbReference type="NCBI Taxonomy" id="3702"/>
    <lineage>
        <taxon>Eukaryota</taxon>
        <taxon>Viridiplantae</taxon>
        <taxon>Streptophyta</taxon>
        <taxon>Embryophyta</taxon>
        <taxon>Tracheophyta</taxon>
        <taxon>Spermatophyta</taxon>
        <taxon>Magnoliopsida</taxon>
        <taxon>eudicotyledons</taxon>
        <taxon>Gunneridae</taxon>
        <taxon>Pentapetalae</taxon>
        <taxon>rosids</taxon>
        <taxon>malvids</taxon>
        <taxon>Brassicales</taxon>
        <taxon>Brassicaceae</taxon>
        <taxon>Camelineae</taxon>
        <taxon>Arabidopsis</taxon>
    </lineage>
</organism>